<feature type="chain" id="PRO_0000405695" description="Shutoff alkaline exonuclease">
    <location>
        <begin position="1"/>
        <end position="485"/>
    </location>
</feature>
<feature type="site" description="Required for function" evidence="1">
    <location>
        <position position="178"/>
    </location>
</feature>
<feature type="site" description="Required for function" evidence="1">
    <location>
        <position position="216"/>
    </location>
</feature>
<feature type="site" description="Required for function" evidence="1">
    <location>
        <position position="239"/>
    </location>
</feature>
<feature type="site" description="Required for function" evidence="1">
    <location>
        <position position="241"/>
    </location>
</feature>
<dbReference type="EC" id="3.1.-.-" evidence="1"/>
<dbReference type="EMBL" id="AF005370">
    <property type="protein sequence ID" value="AAC58083.1"/>
    <property type="molecule type" value="Genomic_DNA"/>
</dbReference>
<dbReference type="PIR" id="T03131">
    <property type="entry name" value="T03131"/>
</dbReference>
<dbReference type="RefSeq" id="NP_065535.1">
    <property type="nucleotide sequence ID" value="NC_002531.1"/>
</dbReference>
<dbReference type="SMR" id="O36386"/>
<dbReference type="KEGG" id="vg:911801"/>
<dbReference type="Proteomes" id="UP000000941">
    <property type="component" value="Segment"/>
</dbReference>
<dbReference type="GO" id="GO:0030430">
    <property type="term" value="C:host cell cytoplasm"/>
    <property type="evidence" value="ECO:0007669"/>
    <property type="project" value="UniProtKB-SubCell"/>
</dbReference>
<dbReference type="GO" id="GO:0042025">
    <property type="term" value="C:host cell nucleus"/>
    <property type="evidence" value="ECO:0007669"/>
    <property type="project" value="UniProtKB-SubCell"/>
</dbReference>
<dbReference type="GO" id="GO:0003677">
    <property type="term" value="F:DNA binding"/>
    <property type="evidence" value="ECO:0007669"/>
    <property type="project" value="InterPro"/>
</dbReference>
<dbReference type="GO" id="GO:0004519">
    <property type="term" value="F:endonuclease activity"/>
    <property type="evidence" value="ECO:0007669"/>
    <property type="project" value="UniProtKB-KW"/>
</dbReference>
<dbReference type="GO" id="GO:0004527">
    <property type="term" value="F:exonuclease activity"/>
    <property type="evidence" value="ECO:0007669"/>
    <property type="project" value="UniProtKB-KW"/>
</dbReference>
<dbReference type="GO" id="GO:0003723">
    <property type="term" value="F:RNA binding"/>
    <property type="evidence" value="ECO:0007669"/>
    <property type="project" value="UniProtKB-KW"/>
</dbReference>
<dbReference type="GO" id="GO:0039595">
    <property type="term" value="P:symbiont-mediated degradation of host mRNA"/>
    <property type="evidence" value="ECO:0007669"/>
    <property type="project" value="UniProtKB-KW"/>
</dbReference>
<dbReference type="GO" id="GO:0039657">
    <property type="term" value="P:symbiont-mediated suppression of host gene expression"/>
    <property type="evidence" value="ECO:0007669"/>
    <property type="project" value="UniProtKB-KW"/>
</dbReference>
<dbReference type="Gene3D" id="1.20.120.860">
    <property type="entry name" value="Herpesvirus alkaline exonuclease, N-terminal domain"/>
    <property type="match status" value="1"/>
</dbReference>
<dbReference type="HAMAP" id="MF_04009">
    <property type="entry name" value="HSV_AN"/>
    <property type="match status" value="1"/>
</dbReference>
<dbReference type="InterPro" id="IPR001616">
    <property type="entry name" value="Herpes_alk_exo"/>
</dbReference>
<dbReference type="InterPro" id="IPR011335">
    <property type="entry name" value="Restrct_endonuc-II-like"/>
</dbReference>
<dbReference type="InterPro" id="IPR034720">
    <property type="entry name" value="Viral_alk_exo"/>
</dbReference>
<dbReference type="Pfam" id="PF01771">
    <property type="entry name" value="Viral_alk_exo"/>
    <property type="match status" value="1"/>
</dbReference>
<dbReference type="PRINTS" id="PR00924">
    <property type="entry name" value="ALKEXNUCLASE"/>
</dbReference>
<dbReference type="SUPFAM" id="SSF52980">
    <property type="entry name" value="Restriction endonuclease-like"/>
    <property type="match status" value="1"/>
</dbReference>
<organism>
    <name type="scientific">Alcelaphine herpesvirus 1 (strain C500)</name>
    <name type="common">AlHV-1</name>
    <name type="synonym">Malignant catarrhal fever virus</name>
    <dbReference type="NCBI Taxonomy" id="654901"/>
    <lineage>
        <taxon>Viruses</taxon>
        <taxon>Duplodnaviria</taxon>
        <taxon>Heunggongvirae</taxon>
        <taxon>Peploviricota</taxon>
        <taxon>Herviviricetes</taxon>
        <taxon>Herpesvirales</taxon>
        <taxon>Orthoherpesviridae</taxon>
        <taxon>Gammaherpesvirinae</taxon>
        <taxon>Macavirus</taxon>
        <taxon>Macavirus alcelaphinegamma1</taxon>
    </lineage>
</organism>
<protein>
    <recommendedName>
        <fullName evidence="1">Shutoff alkaline exonuclease</fullName>
        <shortName evidence="1">SOX</shortName>
        <ecNumber evidence="1">3.1.-.-</ecNumber>
    </recommendedName>
</protein>
<gene>
    <name type="primary">37</name>
</gene>
<organismHost>
    <name type="scientific">Connochaetes taurinus</name>
    <name type="common">Blue wildebeest</name>
    <dbReference type="NCBI Taxonomy" id="9927"/>
</organismHost>
<keyword id="KW-1132">Decay of host mRNAs by virus</keyword>
<keyword id="KW-0244">Early protein</keyword>
<keyword id="KW-0255">Endonuclease</keyword>
<keyword id="KW-1262">Eukaryotic host gene expression shutoff by virus</keyword>
<keyword id="KW-0269">Exonuclease</keyword>
<keyword id="KW-1035">Host cytoplasm</keyword>
<keyword id="KW-1190">Host gene expression shutoff by virus</keyword>
<keyword id="KW-1192">Host mRNA suppression by virus</keyword>
<keyword id="KW-1048">Host nucleus</keyword>
<keyword id="KW-0945">Host-virus interaction</keyword>
<keyword id="KW-0378">Hydrolase</keyword>
<keyword id="KW-0540">Nuclease</keyword>
<keyword id="KW-1185">Reference proteome</keyword>
<keyword id="KW-0694">RNA-binding</keyword>
<evidence type="ECO:0000255" key="1">
    <source>
        <dbReference type="HAMAP-Rule" id="MF_04009"/>
    </source>
</evidence>
<name>AN_ALHV1</name>
<accession>O36386</accession>
<comment type="function">
    <text evidence="1">Plays a role in processing non linear or branched viral DNA intermediates in order to promote the production of mature packaged unit-length linear progeny viral DNA molecules. Exhibits endonuclease and exonuclease activities and accepts both double-stranded and single-stranded DNA as substrate. Exonuclease digestion of DNA is in the 5'-&gt; 3' direction and the products are 5'-monophosphate nucleosides. Additionally, forms a recombinase with the major DNA-binding protein, which displays strand exchange activity. Also acts as a cytoplasmic RNA endonuclease that induces degradation of the majority of the cellular messenger RNAs during early lytic infection. The resulting inhibition of cellular protein synthesis serves to ensure maximal viral gene expression and evasion from host immune response. Internally cleaves host mRNAs which are then degraded by the cellular exonuclease XRN1. Bypasses therefore the regulatory steps of deadenylation and decapping normally required for XRN1 activation.</text>
</comment>
<comment type="subunit">
    <text evidence="1">Forms a complex with the DNA polymerase, the DNA polymerase processivity factor, and the major DNA binding protein.</text>
</comment>
<comment type="subcellular location">
    <subcellularLocation>
        <location evidence="1">Host nucleus</location>
    </subcellularLocation>
    <subcellularLocation>
        <location evidence="1">Host cytoplasm</location>
    </subcellularLocation>
</comment>
<comment type="similarity">
    <text evidence="1">Belongs to the herpesviridae alkaline nuclease family.</text>
</comment>
<reference key="1">
    <citation type="journal article" date="1997" name="J. Virol.">
        <title>Primary structure of the alcelaphine herpesvirus 1 genome.</title>
        <authorList>
            <person name="Ensser A."/>
            <person name="Pflanz R."/>
            <person name="Fleckenstein B."/>
        </authorList>
    </citation>
    <scope>NUCLEOTIDE SEQUENCE [LARGE SCALE GENOMIC DNA]</scope>
</reference>
<sequence length="485" mass="55605">MDFLHKATLLEQTLNMEIGEQVKKLATYTFSNFIRCPEVQQAIASGEIRNDMPHLRFVYIFYLFKKIQDFIGDTEVFGIYEKVMGVERANSAKLVDVVQACTEMRPHIQAQICEHIERLTRGQGENVLWEVLRDGVISSSKLLKFVKQQTPDSKIFNPIPIQKNHYVASPVAFGVRNETVVKKLISELVVEEGIGCVTEFGFMLSPNDGIFGVSLDMCTNASMSDHNTVEFTSTTTIYEIKCRYKYLFSKCDYDPIYQAYQKLYNSPGRQELIDFIQSIQKPTVEYVSRGRLPTQNDYLLSFDRSWDFGPPKRKRKLTSGHKITEQCMKYNCYTESKVIILTDPALTSGKIEVKGSFFVDIYINPRHAYYHQCMLQYKIVTNYVQLTKGDSCKHTHPGVFLVSAFFRKRNSADFPKTYIKTERSFVDASVEIPVLLIITPVFVPHGPLVDTLEQAIKFWQVAVKEEFNHWPWAPTSLSAVGDVTP</sequence>
<proteinExistence type="inferred from homology"/>